<comment type="function">
    <text evidence="1">Transmembrane adapter protein which associates with KLRK1 to form an activation receptor KLRK1-HCST in lymphoid and myeloid cells; this receptor plays a major role in triggering cytotoxicity against target cells expressing cell surface ligands such as MHC class I chain-related MICA and MICB, and UL16-binding proteins (ULBPs); these ligands are up-regulated by stress conditions and pathological state such as viral infection and tumor transformation. Functions as a docking site for PI3-kinase PIK3R1 and GRB2. Interaction of ULBPs with KLRK1-HCST triggers calcium mobilization and activation of the PIK3R1, MAP2K/ERK, and JAK2/STAT5 signaling pathways. Both PIK3R1 and GRB2 are required for full KLRK1-HCST-mediated activation and ultimate killing of target cells. In NK cells, KLRK1-HCST signaling directly induces cytotoxicity and enhances cytokine production initiated via DAP12/TYROBP-associated receptors. In T-cells, it provides primarily costimulation for TCR-induced signals. KLRK1-HCST receptor plays a role in immune surveillance against tumors and is required for cytolysis of tumors cells; indeed, melanoma cells that do not express KLRK1 ligands escape from immune surveillance mediated by NK cells (By similarity).</text>
</comment>
<comment type="subunit">
    <text evidence="1 2">Homodimer; Disulfide-linked. Heterohexamer composed of four subunits of HCST/DAP10 and two subunits of KLRK1. Interacts (via transmembrane domain) with KLRK1 (via transmembrane domain); the interaction is required for KLRK1 NK cell surface and induces NK cell-mediated cytotoxicity. Interacts with PIK3R1 and GRB2. Interacts with CLEC5A. Forms an CLEC5A/TYROBP/HCST trimolecular complex depending almost solely on TYROBP (By similarity). Interacts with CD300H (By similarity).</text>
</comment>
<comment type="subcellular location">
    <subcellularLocation>
        <location evidence="4">Membrane</location>
        <topology evidence="4">Single-pass type I membrane protein</topology>
    </subcellularLocation>
</comment>
<comment type="PTM">
    <text evidence="1">Phosphorylated; PIK3R1 and GRB2 associate specifically with tyrosine-phosphorylated HCST.</text>
</comment>
<comment type="PTM">
    <text evidence="1">O-glycosylated.</text>
</comment>
<comment type="similarity">
    <text evidence="4">Belongs to the DAP10 family.</text>
</comment>
<sequence length="79" mass="8205">MAPPGHLLFLFLLPVAASQTNEGSCSGCGPLSLPLLAGLVAADAVMSLLIVGVVFVCMRLHSRPAQEDGRVYINMPGRG</sequence>
<dbReference type="EMBL" id="AY247020">
    <property type="protein sequence ID" value="AAP79986.1"/>
    <property type="molecule type" value="mRNA"/>
</dbReference>
<dbReference type="RefSeq" id="NP_001005900.1">
    <property type="nucleotide sequence ID" value="NM_001005900.1"/>
</dbReference>
<dbReference type="SMR" id="Q6X9T8"/>
<dbReference type="FunCoup" id="Q6X9T8">
    <property type="interactions" value="131"/>
</dbReference>
<dbReference type="STRING" id="10116.ENSRNOP00000028287"/>
<dbReference type="PhosphoSitePlus" id="Q6X9T8"/>
<dbReference type="PaxDb" id="10116-ENSRNOP00000028287"/>
<dbReference type="Ensembl" id="ENSRNOT00000028287.5">
    <property type="protein sequence ID" value="ENSRNOP00000028287.4"/>
    <property type="gene ID" value="ENSRNOG00000020849.6"/>
</dbReference>
<dbReference type="GeneID" id="474146"/>
<dbReference type="KEGG" id="rno:474146"/>
<dbReference type="UCSC" id="RGD:1359238">
    <property type="organism name" value="rat"/>
</dbReference>
<dbReference type="AGR" id="RGD:1359238"/>
<dbReference type="CTD" id="10870"/>
<dbReference type="RGD" id="1359238">
    <property type="gene designation" value="Hcst"/>
</dbReference>
<dbReference type="eggNOG" id="ENOG502TKP3">
    <property type="taxonomic scope" value="Eukaryota"/>
</dbReference>
<dbReference type="GeneTree" id="ENSGT00390000012777"/>
<dbReference type="HOGENOM" id="CLU_196934_0_0_1"/>
<dbReference type="InParanoid" id="Q6X9T8"/>
<dbReference type="OMA" id="AQMTPGE"/>
<dbReference type="OrthoDB" id="64227at9989"/>
<dbReference type="PhylomeDB" id="Q6X9T8"/>
<dbReference type="TreeFam" id="TF338335"/>
<dbReference type="Reactome" id="R-RNO-198933">
    <property type="pathway name" value="Immunoregulatory interactions between a Lymphoid and a non-Lymphoid cell"/>
</dbReference>
<dbReference type="PRO" id="PR:Q6X9T8"/>
<dbReference type="Proteomes" id="UP000002494">
    <property type="component" value="Chromosome 1"/>
</dbReference>
<dbReference type="Bgee" id="ENSRNOG00000020849">
    <property type="expression patterns" value="Expressed in spleen and 19 other cell types or tissues"/>
</dbReference>
<dbReference type="GO" id="GO:0009986">
    <property type="term" value="C:cell surface"/>
    <property type="evidence" value="ECO:0000250"/>
    <property type="project" value="UniProtKB"/>
</dbReference>
<dbReference type="GO" id="GO:0005886">
    <property type="term" value="C:plasma membrane"/>
    <property type="evidence" value="ECO:0000266"/>
    <property type="project" value="RGD"/>
</dbReference>
<dbReference type="GO" id="GO:0043548">
    <property type="term" value="F:phosphatidylinositol 3-kinase binding"/>
    <property type="evidence" value="ECO:0000266"/>
    <property type="project" value="RGD"/>
</dbReference>
<dbReference type="GO" id="GO:0030674">
    <property type="term" value="F:protein-macromolecule adaptor activity"/>
    <property type="evidence" value="ECO:0000266"/>
    <property type="project" value="RGD"/>
</dbReference>
<dbReference type="GO" id="GO:0005102">
    <property type="term" value="F:signaling receptor binding"/>
    <property type="evidence" value="ECO:0000266"/>
    <property type="project" value="RGD"/>
</dbReference>
<dbReference type="GO" id="GO:0042267">
    <property type="term" value="P:natural killer cell mediated cytotoxicity"/>
    <property type="evidence" value="ECO:0000266"/>
    <property type="project" value="RGD"/>
</dbReference>
<dbReference type="GO" id="GO:0051897">
    <property type="term" value="P:positive regulation of phosphatidylinositol 3-kinase/protein kinase B signal transduction"/>
    <property type="evidence" value="ECO:0000266"/>
    <property type="project" value="RGD"/>
</dbReference>
<dbReference type="GO" id="GO:0050776">
    <property type="term" value="P:regulation of immune response"/>
    <property type="evidence" value="ECO:0007669"/>
    <property type="project" value="InterPro"/>
</dbReference>
<dbReference type="InterPro" id="IPR009861">
    <property type="entry name" value="HCST"/>
</dbReference>
<dbReference type="PANTHER" id="PTHR21409">
    <property type="entry name" value="HEMATOPOIETIC CELL SIGNAL TRANSDUCER"/>
    <property type="match status" value="1"/>
</dbReference>
<dbReference type="PANTHER" id="PTHR21409:SF1">
    <property type="entry name" value="HEMATOPOIETIC CELL SIGNAL TRANSDUCER"/>
    <property type="match status" value="1"/>
</dbReference>
<dbReference type="Pfam" id="PF07213">
    <property type="entry name" value="DAP10"/>
    <property type="match status" value="1"/>
</dbReference>
<protein>
    <recommendedName>
        <fullName>Hematopoietic cell signal transducer</fullName>
    </recommendedName>
    <alternativeName>
        <fullName>DNAX-activation protein 10</fullName>
    </alternativeName>
    <alternativeName>
        <fullName>Membrane protein DAP10</fullName>
    </alternativeName>
</protein>
<keyword id="KW-1015">Disulfide bond</keyword>
<keyword id="KW-0325">Glycoprotein</keyword>
<keyword id="KW-0472">Membrane</keyword>
<keyword id="KW-0597">Phosphoprotein</keyword>
<keyword id="KW-1185">Reference proteome</keyword>
<keyword id="KW-0732">Signal</keyword>
<keyword id="KW-0812">Transmembrane</keyword>
<keyword id="KW-1133">Transmembrane helix</keyword>
<proteinExistence type="inferred from homology"/>
<name>HCST_RAT</name>
<organism>
    <name type="scientific">Rattus norvegicus</name>
    <name type="common">Rat</name>
    <dbReference type="NCBI Taxonomy" id="10116"/>
    <lineage>
        <taxon>Eukaryota</taxon>
        <taxon>Metazoa</taxon>
        <taxon>Chordata</taxon>
        <taxon>Craniata</taxon>
        <taxon>Vertebrata</taxon>
        <taxon>Euteleostomi</taxon>
        <taxon>Mammalia</taxon>
        <taxon>Eutheria</taxon>
        <taxon>Euarchontoglires</taxon>
        <taxon>Glires</taxon>
        <taxon>Rodentia</taxon>
        <taxon>Myomorpha</taxon>
        <taxon>Muroidea</taxon>
        <taxon>Muridae</taxon>
        <taxon>Murinae</taxon>
        <taxon>Rattus</taxon>
    </lineage>
</organism>
<accession>Q6X9T8</accession>
<reference key="1">
    <citation type="submission" date="2003-03" db="EMBL/GenBank/DDBJ databases">
        <title>Molecular cloning of rat DAP10 and DAP12.</title>
        <authorList>
            <person name="Wittmann M.E."/>
            <person name="Bryceson Y.T."/>
            <person name="Dissen E."/>
        </authorList>
    </citation>
    <scope>NUCLEOTIDE SEQUENCE [MRNA]</scope>
    <source>
        <strain>Fischer 344</strain>
    </source>
</reference>
<evidence type="ECO:0000250" key="1"/>
<evidence type="ECO:0000250" key="2">
    <source>
        <dbReference type="UniProtKB" id="Q9UBK5"/>
    </source>
</evidence>
<evidence type="ECO:0000255" key="3"/>
<evidence type="ECO:0000305" key="4"/>
<gene>
    <name type="primary">Hcst</name>
    <name type="synonym">Dap10</name>
</gene>
<feature type="signal peptide" evidence="3">
    <location>
        <begin position="1"/>
        <end position="18"/>
    </location>
</feature>
<feature type="chain" id="PRO_0000330291" description="Hematopoietic cell signal transducer">
    <location>
        <begin position="19"/>
        <end position="79"/>
    </location>
</feature>
<feature type="topological domain" description="Extracellular" evidence="3">
    <location>
        <begin position="19"/>
        <end position="35"/>
    </location>
</feature>
<feature type="transmembrane region" description="Helical" evidence="3">
    <location>
        <begin position="36"/>
        <end position="56"/>
    </location>
</feature>
<feature type="topological domain" description="Cytoplasmic" evidence="3">
    <location>
        <begin position="57"/>
        <end position="79"/>
    </location>
</feature>
<feature type="region of interest" description="PIK3R1 binding site" evidence="1">
    <location>
        <begin position="72"/>
        <end position="75"/>
    </location>
</feature>
<feature type="region of interest" description="GRB2 binding site" evidence="1">
    <location>
        <begin position="72"/>
        <end position="74"/>
    </location>
</feature>
<feature type="modified residue" description="Phosphotyrosine" evidence="2">
    <location>
        <position position="72"/>
    </location>
</feature>